<name>SMO_MOUSE</name>
<proteinExistence type="evidence at protein level"/>
<accession>P56726</accession>
<sequence>MAAGRPVRGPELAPRRLLQLLLLVLLGGPGRGAALSGNVTGPGPHSASGSSRRDVPVTSPPPPLLSHCGRAAHCEPLRYNVCLGSALPYGATTTLLAGDSDSQEEAHGKLVLWSGLRNAPRCWAVIQPLLCAVYMPKCENDRVELPSRTLCQATRGPCAIVERERGWPDFLRCTPDHFPEGCPNEVQNIKFNSSGQCEAPLVRTDNPKSWYEDVEGCGIQCQNPLFTEAEHQDMHSYIAAFGAVTGLCTLFTLATFVADWRNSNRYPAVILFYVNACFFVGSIGWLAQFMDGARREIVCRADGTMRFGEPTSSETLSCVIIFVIVYYALMAGVVWFVVLTYAWHTSFKALGTTYQPLSGKTSYFHLLTWSLPFVLTVAILAVAQVDGDSVSGICFVGYKNYRYRAGFVLAPIGLVLIVGGYFLIRGVMTLFSIKSNHPGLLSEKAASKINETMLRLGIFGFLAFGFVLITFSCHFYDFFNQAEWERSFRDYVLCQANVTIGLPTKKPIPDCEIKNRPSLLVEKINLFAMFGTGIAMSTWVWTKATLLIWRRTWCRLTGHSDDEPKRIKKSKMIAKAFSKRRELLQNPGQELSFSMHTVSHDGPVAGLAFDLNEPSADVSSAWAQHVTKMVARRGAILPQDVSVTPVATPVPPEEQANMWLVEAEISPELEKRLGRKKKRRKRKKEVCPLRPAPELHHSAPVPATSAVPRLPQLPRQKCLVAANAWGTGESCRQGAWTLVSNPFCPEPSPHQDPFLPGASAPRVWAQGRLQGLGSIHSRTNLMEAEILDADSDF</sequence>
<evidence type="ECO:0000250" key="1">
    <source>
        <dbReference type="UniProtKB" id="Q99835"/>
    </source>
</evidence>
<evidence type="ECO:0000255" key="2"/>
<evidence type="ECO:0000255" key="3">
    <source>
        <dbReference type="PROSITE-ProRule" id="PRU00090"/>
    </source>
</evidence>
<evidence type="ECO:0000256" key="4">
    <source>
        <dbReference type="SAM" id="MobiDB-lite"/>
    </source>
</evidence>
<evidence type="ECO:0000269" key="5">
    <source>
    </source>
</evidence>
<evidence type="ECO:0000269" key="6">
    <source>
    </source>
</evidence>
<evidence type="ECO:0000269" key="7">
    <source>
    </source>
</evidence>
<evidence type="ECO:0000269" key="8">
    <source>
    </source>
</evidence>
<evidence type="ECO:0000269" key="9">
    <source>
    </source>
</evidence>
<evidence type="ECO:0000269" key="10">
    <source>
    </source>
</evidence>
<evidence type="ECO:0000269" key="11">
    <source>
    </source>
</evidence>
<evidence type="ECO:0000269" key="12">
    <source>
    </source>
</evidence>
<evidence type="ECO:0000269" key="13">
    <source>
    </source>
</evidence>
<evidence type="ECO:0000269" key="14">
    <source>
    </source>
</evidence>
<evidence type="ECO:0000269" key="15">
    <source>
    </source>
</evidence>
<evidence type="ECO:0000305" key="16"/>
<evidence type="ECO:0007744" key="17">
    <source>
        <dbReference type="PDB" id="6O3C"/>
    </source>
</evidence>
<evidence type="ECO:0007829" key="18">
    <source>
        <dbReference type="PDB" id="6O3C"/>
    </source>
</evidence>
<comment type="function">
    <text evidence="1 12 14">G protein-coupled receptor which associates with the patched protein (PTCH) to transduce hedgehog protein signaling. Binding of sonic hedgehog (SHH) to its receptor patched prevents inhibition of smoothened (SMO) by patched (By similarity). When active, SMO binds to and sequesters protein kinase A catalytic subunit PRKACA at the cell membrane, preventing PRKACA-mediated phosphorylation of GLI transcription factors which releases the GLI proteins from PRKACA-mediated inhibition and allows for transcriptional activation of hedgehog pathway target genes (PubMed:33886552). Required for the accumulation of KIF7, GLI2 and GLI3 in the cilia. Interacts with DLG5 at the ciliary base to induce the accumulation of KIF7 and GLI2 at the ciliary tip for GLI2 activation (PubMed:25644602).</text>
</comment>
<comment type="subunit">
    <text evidence="1 5 8 9 12 14">Homodimer (By similarity). Interacts (via C-terminus) with protein kinase A catalytic subunit PRKACA; interacts with free PRKACA subunits and the interaction leads to sequestration of PRKACA at the membrane, preventing PRKACA-mediated phosphorylation of GLI transcription factors (PubMed:33886552). Interacts with ARRB2 (PubMed:15618519). Interacts with BBS5 and BBS7; the interactions are indicative for the association of SMO with the BBsome complex to facilitate ciliary localization of SMO (PubMed:22072986). Interacts with KIF7, DLG5 and SDCBP (PubMed:25644602). Interacts with GAS8/DRC4 (PubMed:21659505).</text>
</comment>
<comment type="subcellular location">
    <subcellularLocation>
        <location evidence="6 14">Cell membrane</location>
        <topology evidence="2">Multi-pass membrane protein</topology>
    </subcellularLocation>
    <subcellularLocation>
        <location evidence="6 7 8 10 12">Cell projection</location>
        <location evidence="6 7 8 10 12">Cilium</location>
    </subcellularLocation>
    <text evidence="6 7">Cilium localization is promoted by SHH and is required for activity.</text>
</comment>
<comment type="tissue specificity">
    <text evidence="6">During early somite stages of embryonic development, modestly up-regulated in the cells of the node (at protein level).</text>
</comment>
<comment type="domain">
    <text evidence="7 11 13 15">The N-terminal extracellular domain mediates sterol-binding which is required for maximal activation of signaling (PubMed:19464178, PubMed:24171105). Contains a second sterol-binding site within the seven-transmembrane pocket which is also required for activation (PubMed:31263273). The activating sterol is likely to be cholesterol (PubMed:31263273, PubMed:35658032). The extracellular site is required for SHH-induced activity while the site within the transmembrane pocket regulates basal signaling in the absence of SHH (PubMed:35658032).</text>
</comment>
<comment type="PTM">
    <text evidence="14">Phosphorylation by GRK kinases is required for interaction with protein kinase A catalytic subunit PRKACA.</text>
</comment>
<comment type="similarity">
    <text evidence="16">Belongs to the G-protein coupled receptor Fz/Smo family.</text>
</comment>
<dbReference type="EMBL" id="AC069469">
    <property type="status" value="NOT_ANNOTATED_CDS"/>
    <property type="molecule type" value="Genomic_DNA"/>
</dbReference>
<dbReference type="CCDS" id="CCDS19965.1"/>
<dbReference type="PIR" id="JC5539">
    <property type="entry name" value="JC5539"/>
</dbReference>
<dbReference type="RefSeq" id="NP_795970.3">
    <property type="nucleotide sequence ID" value="NM_176996.4"/>
</dbReference>
<dbReference type="PDB" id="6O3C">
    <property type="method" value="X-ray"/>
    <property type="resolution" value="2.80 A"/>
    <property type="chains" value="A=64-566"/>
</dbReference>
<dbReference type="PDBsum" id="6O3C"/>
<dbReference type="EMDB" id="EMD-27062"/>
<dbReference type="EMDB" id="EMD-27063"/>
<dbReference type="SMR" id="P56726"/>
<dbReference type="BioGRID" id="235504">
    <property type="interactions" value="28"/>
</dbReference>
<dbReference type="CORUM" id="P56726"/>
<dbReference type="FunCoup" id="P56726">
    <property type="interactions" value="1363"/>
</dbReference>
<dbReference type="IntAct" id="P56726">
    <property type="interactions" value="17"/>
</dbReference>
<dbReference type="STRING" id="10090.ENSMUSP00000001812"/>
<dbReference type="BindingDB" id="P56726"/>
<dbReference type="ChEMBL" id="CHEMBL6080"/>
<dbReference type="DrugCentral" id="P56726"/>
<dbReference type="GuidetoPHARMACOLOGY" id="239"/>
<dbReference type="GlyCosmos" id="P56726">
    <property type="glycosylation" value="3 sites, No reported glycans"/>
</dbReference>
<dbReference type="GlyGen" id="P56726">
    <property type="glycosylation" value="3 sites, 2 N-linked glycans (3 sites)"/>
</dbReference>
<dbReference type="iPTMnet" id="P56726"/>
<dbReference type="PhosphoSitePlus" id="P56726"/>
<dbReference type="PaxDb" id="10090-ENSMUSP00000001812"/>
<dbReference type="ProteomicsDB" id="258703"/>
<dbReference type="ABCD" id="P56726">
    <property type="antibodies" value="1 sequenced antibody"/>
</dbReference>
<dbReference type="Antibodypedia" id="31982">
    <property type="antibodies" value="600 antibodies from 37 providers"/>
</dbReference>
<dbReference type="DNASU" id="319757"/>
<dbReference type="Ensembl" id="ENSMUST00000001812.5">
    <property type="protein sequence ID" value="ENSMUSP00000001812.5"/>
    <property type="gene ID" value="ENSMUSG00000001761.8"/>
</dbReference>
<dbReference type="GeneID" id="319757"/>
<dbReference type="KEGG" id="mmu:319757"/>
<dbReference type="UCSC" id="uc009bef.2">
    <property type="organism name" value="mouse"/>
</dbReference>
<dbReference type="AGR" id="MGI:108075"/>
<dbReference type="CTD" id="6608"/>
<dbReference type="MGI" id="MGI:108075">
    <property type="gene designation" value="Smo"/>
</dbReference>
<dbReference type="VEuPathDB" id="HostDB:ENSMUSG00000001761"/>
<dbReference type="eggNOG" id="KOG3577">
    <property type="taxonomic scope" value="Eukaryota"/>
</dbReference>
<dbReference type="GeneTree" id="ENSGT00940000157206"/>
<dbReference type="HOGENOM" id="CLU_007873_3_1_1"/>
<dbReference type="InParanoid" id="P56726"/>
<dbReference type="OMA" id="HCEPLRY"/>
<dbReference type="OrthoDB" id="10064659at2759"/>
<dbReference type="PhylomeDB" id="P56726"/>
<dbReference type="TreeFam" id="TF106460"/>
<dbReference type="Reactome" id="R-MMU-5610787">
    <property type="pathway name" value="Hedgehog 'off' state"/>
</dbReference>
<dbReference type="Reactome" id="R-MMU-5620922">
    <property type="pathway name" value="BBSome-mediated cargo-targeting to cilium"/>
</dbReference>
<dbReference type="Reactome" id="R-MMU-5632684">
    <property type="pathway name" value="Hedgehog 'on' state"/>
</dbReference>
<dbReference type="Reactome" id="R-MMU-5635838">
    <property type="pathway name" value="Activation of SMO"/>
</dbReference>
<dbReference type="BioGRID-ORCS" id="319757">
    <property type="hits" value="4 hits in 80 CRISPR screens"/>
</dbReference>
<dbReference type="ChiTaRS" id="Smo">
    <property type="organism name" value="mouse"/>
</dbReference>
<dbReference type="PRO" id="PR:P56726"/>
<dbReference type="Proteomes" id="UP000000589">
    <property type="component" value="Chromosome 6"/>
</dbReference>
<dbReference type="RNAct" id="P56726">
    <property type="molecule type" value="protein"/>
</dbReference>
<dbReference type="Bgee" id="ENSMUSG00000001761">
    <property type="expression patterns" value="Expressed in undifferentiated genital tubercle and 104 other cell types or tissues"/>
</dbReference>
<dbReference type="ExpressionAtlas" id="P56726">
    <property type="expression patterns" value="baseline and differential"/>
</dbReference>
<dbReference type="GO" id="GO:0097731">
    <property type="term" value="C:9+0 non-motile cilium"/>
    <property type="evidence" value="ECO:0000314"/>
    <property type="project" value="MGI"/>
</dbReference>
<dbReference type="GO" id="GO:0005901">
    <property type="term" value="C:caveola"/>
    <property type="evidence" value="ECO:0007669"/>
    <property type="project" value="Ensembl"/>
</dbReference>
<dbReference type="GO" id="GO:0005814">
    <property type="term" value="C:centriole"/>
    <property type="evidence" value="ECO:0000314"/>
    <property type="project" value="MGI"/>
</dbReference>
<dbReference type="GO" id="GO:0060170">
    <property type="term" value="C:ciliary membrane"/>
    <property type="evidence" value="ECO:0000314"/>
    <property type="project" value="MGI"/>
</dbReference>
<dbReference type="GO" id="GO:0005929">
    <property type="term" value="C:cilium"/>
    <property type="evidence" value="ECO:0000314"/>
    <property type="project" value="UniProtKB"/>
</dbReference>
<dbReference type="GO" id="GO:0005737">
    <property type="term" value="C:cytoplasm"/>
    <property type="evidence" value="ECO:0000314"/>
    <property type="project" value="MGI"/>
</dbReference>
<dbReference type="GO" id="GO:0030666">
    <property type="term" value="C:endocytic vesicle membrane"/>
    <property type="evidence" value="ECO:0000304"/>
    <property type="project" value="Reactome"/>
</dbReference>
<dbReference type="GO" id="GO:0005783">
    <property type="term" value="C:endoplasmic reticulum"/>
    <property type="evidence" value="ECO:0000314"/>
    <property type="project" value="MGI"/>
</dbReference>
<dbReference type="GO" id="GO:0005793">
    <property type="term" value="C:endoplasmic reticulum-Golgi intermediate compartment"/>
    <property type="evidence" value="ECO:0000314"/>
    <property type="project" value="MGI"/>
</dbReference>
<dbReference type="GO" id="GO:0005794">
    <property type="term" value="C:Golgi apparatus"/>
    <property type="evidence" value="ECO:0000314"/>
    <property type="project" value="MGI"/>
</dbReference>
<dbReference type="GO" id="GO:0005770">
    <property type="term" value="C:late endosome"/>
    <property type="evidence" value="ECO:0000314"/>
    <property type="project" value="MGI"/>
</dbReference>
<dbReference type="GO" id="GO:0005886">
    <property type="term" value="C:plasma membrane"/>
    <property type="evidence" value="ECO:0000314"/>
    <property type="project" value="UniProtKB"/>
</dbReference>
<dbReference type="GO" id="GO:0004862">
    <property type="term" value="F:cAMP-dependent protein kinase inhibitor activity"/>
    <property type="evidence" value="ECO:0007669"/>
    <property type="project" value="Ensembl"/>
</dbReference>
<dbReference type="GO" id="GO:0004930">
    <property type="term" value="F:G protein-coupled receptor activity"/>
    <property type="evidence" value="ECO:0007669"/>
    <property type="project" value="UniProtKB-KW"/>
</dbReference>
<dbReference type="GO" id="GO:0008142">
    <property type="term" value="F:oxysterol binding"/>
    <property type="evidence" value="ECO:0000314"/>
    <property type="project" value="UniProtKB"/>
</dbReference>
<dbReference type="GO" id="GO:0005113">
    <property type="term" value="F:patched binding"/>
    <property type="evidence" value="ECO:0007669"/>
    <property type="project" value="Ensembl"/>
</dbReference>
<dbReference type="GO" id="GO:0034236">
    <property type="term" value="F:protein kinase A catalytic subunit binding"/>
    <property type="evidence" value="ECO:0000353"/>
    <property type="project" value="UniProtKB"/>
</dbReference>
<dbReference type="GO" id="GO:0140311">
    <property type="term" value="F:protein sequestering activity"/>
    <property type="evidence" value="ECO:0000314"/>
    <property type="project" value="UniProtKB"/>
</dbReference>
<dbReference type="GO" id="GO:0009952">
    <property type="term" value="P:anterior/posterior pattern specification"/>
    <property type="evidence" value="ECO:0000315"/>
    <property type="project" value="MGI"/>
</dbReference>
<dbReference type="GO" id="GO:0006915">
    <property type="term" value="P:apoptotic process"/>
    <property type="evidence" value="ECO:0000315"/>
    <property type="project" value="MGI"/>
</dbReference>
<dbReference type="GO" id="GO:0048143">
    <property type="term" value="P:astrocyte activation"/>
    <property type="evidence" value="ECO:0000315"/>
    <property type="project" value="MGI"/>
</dbReference>
<dbReference type="GO" id="GO:0060413">
    <property type="term" value="P:atrial septum morphogenesis"/>
    <property type="evidence" value="ECO:0000316"/>
    <property type="project" value="MGI"/>
</dbReference>
<dbReference type="GO" id="GO:0048468">
    <property type="term" value="P:cell development"/>
    <property type="evidence" value="ECO:0000315"/>
    <property type="project" value="MGI"/>
</dbReference>
<dbReference type="GO" id="GO:0001708">
    <property type="term" value="P:cell fate specification"/>
    <property type="evidence" value="ECO:0000315"/>
    <property type="project" value="MGI"/>
</dbReference>
<dbReference type="GO" id="GO:0008283">
    <property type="term" value="P:cell population proliferation"/>
    <property type="evidence" value="ECO:0000315"/>
    <property type="project" value="MGI"/>
</dbReference>
<dbReference type="GO" id="GO:0071397">
    <property type="term" value="P:cellular response to cholesterol"/>
    <property type="evidence" value="ECO:0000270"/>
    <property type="project" value="BHF-UCL"/>
</dbReference>
<dbReference type="GO" id="GO:0007417">
    <property type="term" value="P:central nervous system development"/>
    <property type="evidence" value="ECO:0000316"/>
    <property type="project" value="MGI"/>
</dbReference>
<dbReference type="GO" id="GO:0021953">
    <property type="term" value="P:central nervous system neuron differentiation"/>
    <property type="evidence" value="ECO:0000315"/>
    <property type="project" value="MGI"/>
</dbReference>
<dbReference type="GO" id="GO:0021696">
    <property type="term" value="P:cerebellar cortex morphogenesis"/>
    <property type="evidence" value="ECO:0000315"/>
    <property type="project" value="MGI"/>
</dbReference>
<dbReference type="GO" id="GO:0021987">
    <property type="term" value="P:cerebral cortex development"/>
    <property type="evidence" value="ECO:0000315"/>
    <property type="project" value="MGI"/>
</dbReference>
<dbReference type="GO" id="GO:0060242">
    <property type="term" value="P:contact inhibition"/>
    <property type="evidence" value="ECO:0000250"/>
    <property type="project" value="UniProtKB"/>
</dbReference>
<dbReference type="GO" id="GO:0021542">
    <property type="term" value="P:dentate gyrus development"/>
    <property type="evidence" value="ECO:0000315"/>
    <property type="project" value="MGI"/>
</dbReference>
<dbReference type="GO" id="GO:0003140">
    <property type="term" value="P:determination of left/right asymmetry in lateral mesoderm"/>
    <property type="evidence" value="ECO:0000315"/>
    <property type="project" value="BHF-UCL"/>
</dbReference>
<dbReference type="GO" id="GO:0007368">
    <property type="term" value="P:determination of left/right symmetry"/>
    <property type="evidence" value="ECO:0000315"/>
    <property type="project" value="MGI"/>
</dbReference>
<dbReference type="GO" id="GO:0048589">
    <property type="term" value="P:developmental growth"/>
    <property type="evidence" value="ECO:0000315"/>
    <property type="project" value="MGI"/>
</dbReference>
<dbReference type="GO" id="GO:0048565">
    <property type="term" value="P:digestive tract development"/>
    <property type="evidence" value="ECO:0000315"/>
    <property type="project" value="MGI"/>
</dbReference>
<dbReference type="GO" id="GO:0071542">
    <property type="term" value="P:dopaminergic neuron differentiation"/>
    <property type="evidence" value="ECO:0000315"/>
    <property type="project" value="MGI"/>
</dbReference>
<dbReference type="GO" id="GO:0021904">
    <property type="term" value="P:dorsal/ventral neural tube patterning"/>
    <property type="evidence" value="ECO:0000315"/>
    <property type="project" value="MGI"/>
</dbReference>
<dbReference type="GO" id="GO:0009953">
    <property type="term" value="P:dorsal/ventral pattern formation"/>
    <property type="evidence" value="ECO:0000315"/>
    <property type="project" value="MGI"/>
</dbReference>
<dbReference type="GO" id="GO:0048568">
    <property type="term" value="P:embryonic organ development"/>
    <property type="evidence" value="ECO:0000316"/>
    <property type="project" value="MGI"/>
</dbReference>
<dbReference type="GO" id="GO:0030855">
    <property type="term" value="P:epithelial cell differentiation"/>
    <property type="evidence" value="ECO:0000315"/>
    <property type="project" value="MGI"/>
</dbReference>
<dbReference type="GO" id="GO:0050673">
    <property type="term" value="P:epithelial cell proliferation"/>
    <property type="evidence" value="ECO:0000315"/>
    <property type="project" value="MGI"/>
</dbReference>
<dbReference type="GO" id="GO:0060684">
    <property type="term" value="P:epithelial-mesenchymal cell signaling"/>
    <property type="evidence" value="ECO:0000315"/>
    <property type="project" value="MGI"/>
</dbReference>
<dbReference type="GO" id="GO:0048853">
    <property type="term" value="P:forebrain morphogenesis"/>
    <property type="evidence" value="ECO:0000315"/>
    <property type="project" value="BHF-UCL"/>
</dbReference>
<dbReference type="GO" id="GO:0010467">
    <property type="term" value="P:gene expression"/>
    <property type="evidence" value="ECO:0000314"/>
    <property type="project" value="MGI"/>
</dbReference>
<dbReference type="GO" id="GO:0001942">
    <property type="term" value="P:hair follicle development"/>
    <property type="evidence" value="ECO:0000315"/>
    <property type="project" value="MGI"/>
</dbReference>
<dbReference type="GO" id="GO:0031069">
    <property type="term" value="P:hair follicle morphogenesis"/>
    <property type="evidence" value="ECO:0000315"/>
    <property type="project" value="MGI"/>
</dbReference>
<dbReference type="GO" id="GO:0001947">
    <property type="term" value="P:heart looping"/>
    <property type="evidence" value="ECO:0000315"/>
    <property type="project" value="BHF-UCL"/>
</dbReference>
<dbReference type="GO" id="GO:0003007">
    <property type="term" value="P:heart morphogenesis"/>
    <property type="evidence" value="ECO:0000316"/>
    <property type="project" value="MGI"/>
</dbReference>
<dbReference type="GO" id="GO:0048873">
    <property type="term" value="P:homeostasis of number of cells within a tissue"/>
    <property type="evidence" value="ECO:0000314"/>
    <property type="project" value="MGI"/>
</dbReference>
<dbReference type="GO" id="GO:0001701">
    <property type="term" value="P:in utero embryonic development"/>
    <property type="evidence" value="ECO:0000315"/>
    <property type="project" value="MGI"/>
</dbReference>
<dbReference type="GO" id="GO:0070986">
    <property type="term" value="P:left/right axis specification"/>
    <property type="evidence" value="ECO:0000315"/>
    <property type="project" value="MGI"/>
</dbReference>
<dbReference type="GO" id="GO:0060644">
    <property type="term" value="P:mammary gland epithelial cell differentiation"/>
    <property type="evidence" value="ECO:0000315"/>
    <property type="project" value="MGI"/>
</dbReference>
<dbReference type="GO" id="GO:0072285">
    <property type="term" value="P:mesenchymal to epithelial transition involved in metanephric renal vesicle formation"/>
    <property type="evidence" value="ECO:0000315"/>
    <property type="project" value="UniProtKB"/>
</dbReference>
<dbReference type="GO" id="GO:0007494">
    <property type="term" value="P:midgut development"/>
    <property type="evidence" value="ECO:0000315"/>
    <property type="project" value="BHF-UCL"/>
</dbReference>
<dbReference type="GO" id="GO:0035264">
    <property type="term" value="P:multicellular organism growth"/>
    <property type="evidence" value="ECO:0000315"/>
    <property type="project" value="MGI"/>
</dbReference>
<dbReference type="GO" id="GO:0051451">
    <property type="term" value="P:myoblast migration"/>
    <property type="evidence" value="ECO:0000316"/>
    <property type="project" value="MGI"/>
</dbReference>
<dbReference type="GO" id="GO:0043066">
    <property type="term" value="P:negative regulation of apoptotic process"/>
    <property type="evidence" value="ECO:0000315"/>
    <property type="project" value="MGI"/>
</dbReference>
<dbReference type="GO" id="GO:0043392">
    <property type="term" value="P:negative regulation of DNA binding"/>
    <property type="evidence" value="ECO:0000315"/>
    <property type="project" value="UniProtKB"/>
</dbReference>
<dbReference type="GO" id="GO:0045892">
    <property type="term" value="P:negative regulation of DNA-templated transcription"/>
    <property type="evidence" value="ECO:0000315"/>
    <property type="project" value="CACAO"/>
</dbReference>
<dbReference type="GO" id="GO:0030857">
    <property type="term" value="P:negative regulation of epithelial cell differentiation"/>
    <property type="evidence" value="ECO:0000315"/>
    <property type="project" value="MGI"/>
</dbReference>
<dbReference type="GO" id="GO:0010629">
    <property type="term" value="P:negative regulation of gene expression"/>
    <property type="evidence" value="ECO:0000315"/>
    <property type="project" value="UniProtKB"/>
</dbReference>
<dbReference type="GO" id="GO:0051799">
    <property type="term" value="P:negative regulation of hair follicle development"/>
    <property type="evidence" value="ECO:0000315"/>
    <property type="project" value="MGI"/>
</dbReference>
<dbReference type="GO" id="GO:0001933">
    <property type="term" value="P:negative regulation of protein phosphorylation"/>
    <property type="evidence" value="ECO:0000314"/>
    <property type="project" value="UniProtKB"/>
</dbReference>
<dbReference type="GO" id="GO:0000122">
    <property type="term" value="P:negative regulation of transcription by RNA polymerase II"/>
    <property type="evidence" value="ECO:0000315"/>
    <property type="project" value="MGI"/>
</dbReference>
<dbReference type="GO" id="GO:0001755">
    <property type="term" value="P:neural crest cell migration"/>
    <property type="evidence" value="ECO:0000316"/>
    <property type="project" value="MGI"/>
</dbReference>
<dbReference type="GO" id="GO:0007405">
    <property type="term" value="P:neuroblast proliferation"/>
    <property type="evidence" value="ECO:0000316"/>
    <property type="project" value="MGI"/>
</dbReference>
<dbReference type="GO" id="GO:0042475">
    <property type="term" value="P:odontogenesis of dentin-containing tooth"/>
    <property type="evidence" value="ECO:0000315"/>
    <property type="project" value="MGI"/>
</dbReference>
<dbReference type="GO" id="GO:0001503">
    <property type="term" value="P:ossification"/>
    <property type="evidence" value="ECO:0000315"/>
    <property type="project" value="MGI"/>
</dbReference>
<dbReference type="GO" id="GO:0001649">
    <property type="term" value="P:osteoblast differentiation"/>
    <property type="evidence" value="ECO:0000315"/>
    <property type="project" value="MGI"/>
</dbReference>
<dbReference type="GO" id="GO:0061113">
    <property type="term" value="P:pancreas morphogenesis"/>
    <property type="evidence" value="ECO:0000315"/>
    <property type="project" value="MGI"/>
</dbReference>
<dbReference type="GO" id="GO:0007389">
    <property type="term" value="P:pattern specification process"/>
    <property type="evidence" value="ECO:0000315"/>
    <property type="project" value="MGI"/>
</dbReference>
<dbReference type="GO" id="GO:0090190">
    <property type="term" value="P:positive regulation of branching involved in ureteric bud morphogenesis"/>
    <property type="evidence" value="ECO:0000315"/>
    <property type="project" value="UniProtKB"/>
</dbReference>
<dbReference type="GO" id="GO:0030335">
    <property type="term" value="P:positive regulation of cell migration"/>
    <property type="evidence" value="ECO:0007669"/>
    <property type="project" value="Ensembl"/>
</dbReference>
<dbReference type="GO" id="GO:0008284">
    <property type="term" value="P:positive regulation of cell population proliferation"/>
    <property type="evidence" value="ECO:0000315"/>
    <property type="project" value="MGI"/>
</dbReference>
<dbReference type="GO" id="GO:0045893">
    <property type="term" value="P:positive regulation of DNA-templated transcription"/>
    <property type="evidence" value="ECO:0000315"/>
    <property type="project" value="CACAO"/>
</dbReference>
<dbReference type="GO" id="GO:0050679">
    <property type="term" value="P:positive regulation of epithelial cell proliferation"/>
    <property type="evidence" value="ECO:0000315"/>
    <property type="project" value="MGI"/>
</dbReference>
<dbReference type="GO" id="GO:0010628">
    <property type="term" value="P:positive regulation of gene expression"/>
    <property type="evidence" value="ECO:0000315"/>
    <property type="project" value="UniProtKB"/>
</dbReference>
<dbReference type="GO" id="GO:0002053">
    <property type="term" value="P:positive regulation of mesenchymal cell proliferation"/>
    <property type="evidence" value="ECO:0000315"/>
    <property type="project" value="MGI"/>
</dbReference>
<dbReference type="GO" id="GO:0040018">
    <property type="term" value="P:positive regulation of multicellular organism growth"/>
    <property type="evidence" value="ECO:0000315"/>
    <property type="project" value="CACAO"/>
</dbReference>
<dbReference type="GO" id="GO:0002052">
    <property type="term" value="P:positive regulation of neuroblast proliferation"/>
    <property type="evidence" value="ECO:0000316"/>
    <property type="project" value="MGI"/>
</dbReference>
<dbReference type="GO" id="GO:0046622">
    <property type="term" value="P:positive regulation of organ growth"/>
    <property type="evidence" value="ECO:0000315"/>
    <property type="project" value="CACAO"/>
</dbReference>
<dbReference type="GO" id="GO:0042307">
    <property type="term" value="P:positive regulation of protein import into nucleus"/>
    <property type="evidence" value="ECO:0000316"/>
    <property type="project" value="MGI"/>
</dbReference>
<dbReference type="GO" id="GO:0045880">
    <property type="term" value="P:positive regulation of smoothened signaling pathway"/>
    <property type="evidence" value="ECO:0000315"/>
    <property type="project" value="MGI"/>
</dbReference>
<dbReference type="GO" id="GO:0045944">
    <property type="term" value="P:positive regulation of transcription by RNA polymerase II"/>
    <property type="evidence" value="ECO:0000315"/>
    <property type="project" value="BHF-UCL"/>
</dbReference>
<dbReference type="GO" id="GO:0006606">
    <property type="term" value="P:protein import into nucleus"/>
    <property type="evidence" value="ECO:0000316"/>
    <property type="project" value="MGI"/>
</dbReference>
<dbReference type="GO" id="GO:0034504">
    <property type="term" value="P:protein localization to nucleus"/>
    <property type="evidence" value="ECO:0000315"/>
    <property type="project" value="MGI"/>
</dbReference>
<dbReference type="GO" id="GO:0050821">
    <property type="term" value="P:protein stabilization"/>
    <property type="evidence" value="ECO:0000314"/>
    <property type="project" value="MGI"/>
</dbReference>
<dbReference type="GO" id="GO:0010468">
    <property type="term" value="P:regulation of gene expression"/>
    <property type="evidence" value="ECO:0000316"/>
    <property type="project" value="MGI"/>
</dbReference>
<dbReference type="GO" id="GO:2000826">
    <property type="term" value="P:regulation of heart morphogenesis"/>
    <property type="evidence" value="ECO:0000315"/>
    <property type="project" value="BHF-UCL"/>
</dbReference>
<dbReference type="GO" id="GO:0032879">
    <property type="term" value="P:regulation of localization"/>
    <property type="evidence" value="ECO:0000315"/>
    <property type="project" value="CACAO"/>
</dbReference>
<dbReference type="GO" id="GO:1904672">
    <property type="term" value="P:regulation of somatic stem cell population maintenance"/>
    <property type="evidence" value="ECO:0000315"/>
    <property type="project" value="MGI"/>
</dbReference>
<dbReference type="GO" id="GO:1902140">
    <property type="term" value="P:response to inositol"/>
    <property type="evidence" value="ECO:0000314"/>
    <property type="project" value="MGI"/>
</dbReference>
<dbReference type="GO" id="GO:0048741">
    <property type="term" value="P:skeletal muscle fiber development"/>
    <property type="evidence" value="ECO:0000315"/>
    <property type="project" value="MGI"/>
</dbReference>
<dbReference type="GO" id="GO:0048745">
    <property type="term" value="P:smooth muscle tissue development"/>
    <property type="evidence" value="ECO:0007669"/>
    <property type="project" value="Ensembl"/>
</dbReference>
<dbReference type="GO" id="GO:0007224">
    <property type="term" value="P:smoothened signaling pathway"/>
    <property type="evidence" value="ECO:0000314"/>
    <property type="project" value="MGI"/>
</dbReference>
<dbReference type="GO" id="GO:0061053">
    <property type="term" value="P:somite development"/>
    <property type="evidence" value="ECO:0000315"/>
    <property type="project" value="BHF-UCL"/>
</dbReference>
<dbReference type="GO" id="GO:0021513">
    <property type="term" value="P:spinal cord dorsal/ventral patterning"/>
    <property type="evidence" value="ECO:0000315"/>
    <property type="project" value="BHF-UCL"/>
</dbReference>
<dbReference type="GO" id="GO:0021794">
    <property type="term" value="P:thalamus development"/>
    <property type="evidence" value="ECO:0000315"/>
    <property type="project" value="MGI"/>
</dbReference>
<dbReference type="GO" id="GO:0003323">
    <property type="term" value="P:type B pancreatic cell development"/>
    <property type="evidence" value="ECO:0000315"/>
    <property type="project" value="MGI"/>
</dbReference>
<dbReference type="GO" id="GO:0001570">
    <property type="term" value="P:vasculogenesis"/>
    <property type="evidence" value="ECO:0000315"/>
    <property type="project" value="MGI"/>
</dbReference>
<dbReference type="GO" id="GO:0007371">
    <property type="term" value="P:ventral midline determination"/>
    <property type="evidence" value="ECO:0000315"/>
    <property type="project" value="BHF-UCL"/>
</dbReference>
<dbReference type="CDD" id="cd15030">
    <property type="entry name" value="7tmF_SMO_homolog"/>
    <property type="match status" value="1"/>
</dbReference>
<dbReference type="CDD" id="cd07451">
    <property type="entry name" value="CRD_SMO"/>
    <property type="match status" value="1"/>
</dbReference>
<dbReference type="FunFam" id="1.10.2000.10:FF:000010">
    <property type="entry name" value="Smoothened, frizzled class receptor"/>
    <property type="match status" value="1"/>
</dbReference>
<dbReference type="FunFam" id="1.20.1070.10:FF:000068">
    <property type="entry name" value="Smoothened, frizzled class receptor"/>
    <property type="match status" value="1"/>
</dbReference>
<dbReference type="Gene3D" id="1.10.2000.10">
    <property type="entry name" value="Frizzled cysteine-rich domain"/>
    <property type="match status" value="1"/>
</dbReference>
<dbReference type="Gene3D" id="1.20.1070.10">
    <property type="entry name" value="Rhodopsin 7-helix transmembrane proteins"/>
    <property type="match status" value="1"/>
</dbReference>
<dbReference type="InterPro" id="IPR015526">
    <property type="entry name" value="Frizzled/SFRP"/>
</dbReference>
<dbReference type="InterPro" id="IPR000539">
    <property type="entry name" value="Frizzled/Smoothened_7TM"/>
</dbReference>
<dbReference type="InterPro" id="IPR020067">
    <property type="entry name" value="Frizzled_dom"/>
</dbReference>
<dbReference type="InterPro" id="IPR036790">
    <property type="entry name" value="Frizzled_dom_sf"/>
</dbReference>
<dbReference type="InterPro" id="IPR017981">
    <property type="entry name" value="GPCR_2-like_7TM"/>
</dbReference>
<dbReference type="InterPro" id="IPR035683">
    <property type="entry name" value="SMO_7TM"/>
</dbReference>
<dbReference type="InterPro" id="IPR041771">
    <property type="entry name" value="SMO_CRD"/>
</dbReference>
<dbReference type="PANTHER" id="PTHR11309">
    <property type="entry name" value="FRIZZLED"/>
    <property type="match status" value="1"/>
</dbReference>
<dbReference type="PANTHER" id="PTHR11309:SF35">
    <property type="entry name" value="PROTEIN SMOOTHENED"/>
    <property type="match status" value="1"/>
</dbReference>
<dbReference type="Pfam" id="PF01534">
    <property type="entry name" value="Frizzled"/>
    <property type="match status" value="1"/>
</dbReference>
<dbReference type="Pfam" id="PF01392">
    <property type="entry name" value="Fz"/>
    <property type="match status" value="1"/>
</dbReference>
<dbReference type="PRINTS" id="PR00489">
    <property type="entry name" value="FRIZZLED"/>
</dbReference>
<dbReference type="SMART" id="SM00063">
    <property type="entry name" value="FRI"/>
    <property type="match status" value="1"/>
</dbReference>
<dbReference type="SMART" id="SM01330">
    <property type="entry name" value="Frizzled"/>
    <property type="match status" value="1"/>
</dbReference>
<dbReference type="SUPFAM" id="SSF63501">
    <property type="entry name" value="Frizzled cysteine-rich domain"/>
    <property type="match status" value="1"/>
</dbReference>
<dbReference type="PROSITE" id="PS50038">
    <property type="entry name" value="FZ"/>
    <property type="match status" value="1"/>
</dbReference>
<dbReference type="PROSITE" id="PS50261">
    <property type="entry name" value="G_PROTEIN_RECEP_F2_4"/>
    <property type="match status" value="1"/>
</dbReference>
<keyword id="KW-0002">3D-structure</keyword>
<keyword id="KW-1003">Cell membrane</keyword>
<keyword id="KW-0966">Cell projection</keyword>
<keyword id="KW-0217">Developmental protein</keyword>
<keyword id="KW-1015">Disulfide bond</keyword>
<keyword id="KW-0297">G-protein coupled receptor</keyword>
<keyword id="KW-0325">Glycoprotein</keyword>
<keyword id="KW-0472">Membrane</keyword>
<keyword id="KW-0597">Phosphoprotein</keyword>
<keyword id="KW-0675">Receptor</keyword>
<keyword id="KW-1185">Reference proteome</keyword>
<keyword id="KW-0732">Signal</keyword>
<keyword id="KW-0807">Transducer</keyword>
<keyword id="KW-0812">Transmembrane</keyword>
<keyword id="KW-1133">Transmembrane helix</keyword>
<protein>
    <recommendedName>
        <fullName>Protein smoothened</fullName>
    </recommendedName>
</protein>
<gene>
    <name type="primary">Smo</name>
    <name type="synonym">Smoh</name>
</gene>
<organism>
    <name type="scientific">Mus musculus</name>
    <name type="common">Mouse</name>
    <dbReference type="NCBI Taxonomy" id="10090"/>
    <lineage>
        <taxon>Eukaryota</taxon>
        <taxon>Metazoa</taxon>
        <taxon>Chordata</taxon>
        <taxon>Craniata</taxon>
        <taxon>Vertebrata</taxon>
        <taxon>Euteleostomi</taxon>
        <taxon>Mammalia</taxon>
        <taxon>Eutheria</taxon>
        <taxon>Euarchontoglires</taxon>
        <taxon>Glires</taxon>
        <taxon>Rodentia</taxon>
        <taxon>Myomorpha</taxon>
        <taxon>Muroidea</taxon>
        <taxon>Muridae</taxon>
        <taxon>Murinae</taxon>
        <taxon>Mus</taxon>
        <taxon>Mus</taxon>
    </lineage>
</organism>
<feature type="signal peptide" evidence="2">
    <location>
        <begin position="1"/>
        <end position="32"/>
    </location>
</feature>
<feature type="chain" id="PRO_0000013016" description="Protein smoothened">
    <location>
        <begin position="33"/>
        <end position="793"/>
    </location>
</feature>
<feature type="topological domain" description="Extracellular" evidence="2">
    <location>
        <begin position="33"/>
        <end position="237"/>
    </location>
</feature>
<feature type="transmembrane region" description="Helical; Name=1" evidence="2">
    <location>
        <begin position="238"/>
        <end position="258"/>
    </location>
</feature>
<feature type="topological domain" description="Cytoplasmic" evidence="2">
    <location>
        <begin position="259"/>
        <end position="265"/>
    </location>
</feature>
<feature type="transmembrane region" description="Helical; Name=2" evidence="2">
    <location>
        <begin position="266"/>
        <end position="286"/>
    </location>
</feature>
<feature type="topological domain" description="Extracellular" evidence="2">
    <location>
        <begin position="287"/>
        <end position="318"/>
    </location>
</feature>
<feature type="transmembrane region" description="Helical; Name=3" evidence="2">
    <location>
        <begin position="319"/>
        <end position="339"/>
    </location>
</feature>
<feature type="topological domain" description="Cytoplasmic" evidence="2">
    <location>
        <begin position="340"/>
        <end position="362"/>
    </location>
</feature>
<feature type="transmembrane region" description="Helical; Name=4" evidence="2">
    <location>
        <begin position="363"/>
        <end position="383"/>
    </location>
</feature>
<feature type="topological domain" description="Extracellular" evidence="2">
    <location>
        <begin position="384"/>
        <end position="406"/>
    </location>
</feature>
<feature type="transmembrane region" description="Helical; Name=5" evidence="2">
    <location>
        <begin position="407"/>
        <end position="427"/>
    </location>
</feature>
<feature type="topological domain" description="Cytoplasmic" evidence="2">
    <location>
        <begin position="428"/>
        <end position="455"/>
    </location>
</feature>
<feature type="transmembrane region" description="Helical; Name=6" evidence="2">
    <location>
        <begin position="456"/>
        <end position="476"/>
    </location>
</feature>
<feature type="topological domain" description="Extracellular" evidence="2">
    <location>
        <begin position="477"/>
        <end position="528"/>
    </location>
</feature>
<feature type="transmembrane region" description="Helical; Name=7" evidence="2">
    <location>
        <begin position="529"/>
        <end position="549"/>
    </location>
</feature>
<feature type="topological domain" description="Cytoplasmic" evidence="2">
    <location>
        <begin position="550"/>
        <end position="793"/>
    </location>
</feature>
<feature type="domain" description="FZ" evidence="3">
    <location>
        <begin position="69"/>
        <end position="185"/>
    </location>
</feature>
<feature type="region of interest" description="Disordered" evidence="4">
    <location>
        <begin position="35"/>
        <end position="61"/>
    </location>
</feature>
<feature type="region of interest" description="Interaction with BBS5 and BBS7" evidence="9">
    <location>
        <begin position="542"/>
        <end position="573"/>
    </location>
</feature>
<feature type="region of interest" description="Required for interaction with PRKACA" evidence="14">
    <location>
        <begin position="574"/>
        <end position="657"/>
    </location>
</feature>
<feature type="region of interest" description="Interaction with DLG5" evidence="12">
    <location>
        <begin position="585"/>
        <end position="597"/>
    </location>
</feature>
<feature type="region of interest" description="Disordered" evidence="4">
    <location>
        <begin position="674"/>
        <end position="703"/>
    </location>
</feature>
<feature type="compositionally biased region" description="Basic residues" evidence="4">
    <location>
        <begin position="674"/>
        <end position="684"/>
    </location>
</feature>
<feature type="binding site" evidence="13 17">
    <location>
        <position position="99"/>
    </location>
    <ligand>
        <name>cholesterol</name>
        <dbReference type="ChEBI" id="CHEBI:16113"/>
    </ligand>
</feature>
<feature type="binding site" evidence="13 17">
    <location>
        <position position="398"/>
    </location>
    <ligand>
        <name>cholesterol</name>
        <dbReference type="ChEBI" id="CHEBI:16113"/>
    </ligand>
</feature>
<feature type="modified residue" description="Phosphoserine" evidence="14">
    <location>
        <position position="560"/>
    </location>
</feature>
<feature type="modified residue" description="Phosphoserine" evidence="14">
    <location>
        <position position="578"/>
    </location>
</feature>
<feature type="modified residue" description="Phosphoserine" evidence="14">
    <location>
        <position position="594"/>
    </location>
</feature>
<feature type="modified residue" description="Phosphothreonine" evidence="14">
    <location>
        <position position="597"/>
    </location>
</feature>
<feature type="modified residue" description="Phosphoserine" evidence="14">
    <location>
        <position position="599"/>
    </location>
</feature>
<feature type="modified residue" description="Phosphoserine" evidence="14">
    <location>
        <position position="642"/>
    </location>
</feature>
<feature type="modified residue" description="Phosphothreonine" evidence="14">
    <location>
        <position position="644"/>
    </location>
</feature>
<feature type="modified residue" description="Phosphothreonine" evidence="14">
    <location>
        <position position="648"/>
    </location>
</feature>
<feature type="modified residue" description="Phosphoserine" evidence="14">
    <location>
        <position position="666"/>
    </location>
</feature>
<feature type="glycosylation site" description="N-linked (GlcNAc...) asparagine" evidence="2">
    <location>
        <position position="38"/>
    </location>
</feature>
<feature type="glycosylation site" description="N-linked (GlcNAc...) asparagine" evidence="2">
    <location>
        <position position="192"/>
    </location>
</feature>
<feature type="glycosylation site" description="N-linked (GlcNAc...) asparagine" evidence="2">
    <location>
        <position position="497"/>
    </location>
</feature>
<feature type="disulfide bond" evidence="13 17">
    <location>
        <begin position="68"/>
        <end position="182"/>
    </location>
</feature>
<feature type="disulfide bond" evidence="3 13 17">
    <location>
        <begin position="74"/>
        <end position="138"/>
    </location>
</feature>
<feature type="disulfide bond" evidence="3 13 17">
    <location>
        <begin position="82"/>
        <end position="131"/>
    </location>
</feature>
<feature type="disulfide bond" evidence="3 13 17">
    <location>
        <begin position="122"/>
        <end position="158"/>
    </location>
</feature>
<feature type="disulfide bond" evidence="3 13 17">
    <location>
        <begin position="151"/>
        <end position="173"/>
    </location>
</feature>
<feature type="disulfide bond" evidence="13 17">
    <location>
        <begin position="197"/>
        <end position="217"/>
    </location>
</feature>
<feature type="disulfide bond" evidence="13 17">
    <location>
        <begin position="221"/>
        <end position="299"/>
    </location>
</feature>
<feature type="disulfide bond" evidence="13 17">
    <location>
        <begin position="318"/>
        <end position="394"/>
    </location>
</feature>
<feature type="disulfide bond" evidence="13 17">
    <location>
        <begin position="494"/>
        <end position="511"/>
    </location>
</feature>
<feature type="mutagenesis site" description="No effect on sterol binding." evidence="11">
    <original>P</original>
    <variation>N</variation>
    <location>
        <position position="88"/>
    </location>
</feature>
<feature type="mutagenesis site" description="Loss of cholesterol binding and reduced SHH-induced activation. No effect on basal signaling." evidence="15">
    <original>D</original>
    <variation>A</variation>
    <location>
        <position position="99"/>
    </location>
</feature>
<feature type="mutagenesis site" description="Loss of sterol binding." evidence="10">
    <original>LWSGLRNA</original>
    <variation>DYYALKHV</variation>
    <location>
        <begin position="112"/>
        <end position="119"/>
    </location>
</feature>
<feature type="mutagenesis site" description="Reduced sterol binding." evidence="11">
    <original>L</original>
    <variation>A</variation>
    <variation>D</variation>
    <location>
        <position position="112"/>
    </location>
</feature>
<feature type="mutagenesis site" description="Loss of sterol binding and reduced response to SHH." evidence="10">
    <original>L</original>
    <variation>D</variation>
    <location>
        <position position="112"/>
    </location>
</feature>
<feature type="mutagenesis site" description="Loss of sterol binding and reduced response to SHH." evidence="10">
    <original>W</original>
    <variation>Y</variation>
    <location>
        <position position="113"/>
    </location>
</feature>
<feature type="mutagenesis site" description="No effect on sterol binding." evidence="10">
    <original>S</original>
    <variation>Y</variation>
    <location>
        <position position="114"/>
    </location>
</feature>
<feature type="mutagenesis site" description="Reduced sterol binding." evidence="11">
    <original>G</original>
    <variation>F</variation>
    <location>
        <position position="115"/>
    </location>
</feature>
<feature type="mutagenesis site" description="Reduced sterol binding." evidence="11">
    <original>L</original>
    <variation>A</variation>
    <location>
        <position position="116"/>
    </location>
</feature>
<feature type="mutagenesis site" description="No effect on sterol binding." evidence="11">
    <original>N</original>
    <variation>A</variation>
    <location>
        <position position="118"/>
    </location>
</feature>
<feature type="mutagenesis site" description="No effect on sterol binding." evidence="11">
    <original>P</original>
    <variation>A</variation>
    <variation>E</variation>
    <variation>G</variation>
    <location>
        <position position="120"/>
    </location>
</feature>
<feature type="mutagenesis site" description="No effect on sterol binding." evidence="11">
    <original>P</original>
    <variation>S</variation>
    <variation>E</variation>
    <variation>R</variation>
    <location>
        <position position="128"/>
    </location>
</feature>
<feature type="mutagenesis site" description="Reduced sterol binding." evidence="11">
    <original>Y</original>
    <variation>F</variation>
    <location>
        <position position="134"/>
    </location>
</feature>
<feature type="mutagenesis site" description="No effect on sterol binding." evidence="11">
    <original>L</original>
    <variation>A</variation>
    <variation>D</variation>
    <variation>S</variation>
    <location>
        <position position="150"/>
    </location>
</feature>
<feature type="mutagenesis site" description="Reduced protein levels, reduced activity and loss of localization to cilia." evidence="7">
    <original>C</original>
    <variation>Y</variation>
    <location>
        <position position="151"/>
    </location>
</feature>
<feature type="mutagenesis site" description="No effect on sterol binding." evidence="11">
    <original>E</original>
    <variation>A</variation>
    <location>
        <position position="162"/>
    </location>
</feature>
<feature type="mutagenesis site" description="No effect on sterol binding." evidence="11">
    <original>R</original>
    <variation>A</variation>
    <variation>E</variation>
    <location>
        <position position="165"/>
    </location>
</feature>
<feature type="mutagenesis site" description="Reduced sterol binding." evidence="11">
    <original>G</original>
    <variation>F</variation>
    <location>
        <position position="166"/>
    </location>
</feature>
<feature type="mutagenesis site" description="Reduced sterol binding." evidence="11">
    <original>P</original>
    <variation>A</variation>
    <location>
        <position position="168"/>
    </location>
</feature>
<feature type="mutagenesis site" description="Reduced sterol binding." evidence="11">
    <original>F</original>
    <variation>A</variation>
    <location>
        <position position="170"/>
    </location>
</feature>
<feature type="mutagenesis site" description="Failure to localize to primary cilia. Loss of cholesterol-induced activity." evidence="13 15">
    <original>V</original>
    <variation>F</variation>
    <location>
        <position position="333"/>
    </location>
</feature>
<feature type="mutagenesis site" description="Remains responsive to SHH and 20S-hydroxycholesterol. Reduced basal signaling." evidence="13 15">
    <original>Y</original>
    <variation>F</variation>
    <location>
        <position position="398"/>
    </location>
</feature>
<feature type="mutagenesis site" description="Loss of activity." evidence="13">
    <original>V</original>
    <variation>F</variation>
    <location>
        <position position="408"/>
    </location>
</feature>
<feature type="mutagenesis site" description="Loss of activity." evidence="13">
    <original>I</original>
    <variation>F</variation>
    <location>
        <position position="412"/>
    </location>
</feature>
<feature type="mutagenesis site" description="Reduced activity in response to SHH." evidence="13">
    <original>G</original>
    <variation>F</variation>
    <location>
        <position position="420"/>
    </location>
</feature>
<feature type="mutagenesis site" description="Loss of activity in response to SHH." evidence="13">
    <original>A</original>
    <variation>F</variation>
    <location>
        <position position="463"/>
    </location>
</feature>
<feature type="mutagenesis site" description="Loss of cholesterol-induced activity." evidence="13">
    <original>T</original>
    <variation>Q</variation>
    <location>
        <position position="470"/>
    </location>
</feature>
<feature type="mutagenesis site" description="Loss of activity and cilium localization." evidence="6">
    <original>WR</original>
    <variation>AA</variation>
    <location>
        <begin position="549"/>
        <end position="550"/>
    </location>
</feature>
<feature type="sequence conflict" description="In Ref. 1; no nucleotide entry." evidence="16" ref="1">
    <original>D</original>
    <variation>N</variation>
    <location>
        <position position="54"/>
    </location>
</feature>
<feature type="sequence conflict" description="In Ref. 1; no nucleotide entry." evidence="16" ref="1">
    <original>Y</original>
    <variation>L</variation>
    <location>
        <position position="266"/>
    </location>
</feature>
<feature type="sequence conflict" description="In Ref. 1; no nucleotide entry." evidence="16" ref="1">
    <original>R</original>
    <variation>G</variation>
    <location>
        <position position="690"/>
    </location>
</feature>
<feature type="strand" evidence="18">
    <location>
        <begin position="69"/>
        <end position="71"/>
    </location>
</feature>
<feature type="strand" evidence="18">
    <location>
        <begin position="80"/>
        <end position="82"/>
    </location>
</feature>
<feature type="strand" evidence="18">
    <location>
        <begin position="94"/>
        <end position="96"/>
    </location>
</feature>
<feature type="helix" evidence="18">
    <location>
        <begin position="103"/>
        <end position="113"/>
    </location>
</feature>
<feature type="helix" evidence="18">
    <location>
        <begin position="114"/>
        <end position="117"/>
    </location>
</feature>
<feature type="helix" evidence="18">
    <location>
        <begin position="120"/>
        <end position="133"/>
    </location>
</feature>
<feature type="strand" evidence="18">
    <location>
        <begin position="140"/>
        <end position="144"/>
    </location>
</feature>
<feature type="helix" evidence="18">
    <location>
        <begin position="148"/>
        <end position="152"/>
    </location>
</feature>
<feature type="turn" evidence="18">
    <location>
        <begin position="153"/>
        <end position="158"/>
    </location>
</feature>
<feature type="helix" evidence="18">
    <location>
        <begin position="159"/>
        <end position="164"/>
    </location>
</feature>
<feature type="helix" evidence="18">
    <location>
        <begin position="169"/>
        <end position="171"/>
    </location>
</feature>
<feature type="turn" evidence="18">
    <location>
        <begin position="175"/>
        <end position="177"/>
    </location>
</feature>
<feature type="helix" evidence="18">
    <location>
        <begin position="185"/>
        <end position="188"/>
    </location>
</feature>
<feature type="strand" evidence="18">
    <location>
        <begin position="201"/>
        <end position="203"/>
    </location>
</feature>
<feature type="helix" evidence="18">
    <location>
        <begin position="207"/>
        <end position="209"/>
    </location>
</feature>
<feature type="strand" evidence="18">
    <location>
        <begin position="217"/>
        <end position="222"/>
    </location>
</feature>
<feature type="helix" evidence="18">
    <location>
        <begin position="228"/>
        <end position="258"/>
    </location>
</feature>
<feature type="helix" evidence="18">
    <location>
        <begin position="260"/>
        <end position="263"/>
    </location>
</feature>
<feature type="helix" evidence="18">
    <location>
        <begin position="266"/>
        <end position="286"/>
    </location>
</feature>
<feature type="helix" evidence="18">
    <location>
        <begin position="287"/>
        <end position="289"/>
    </location>
</feature>
<feature type="helix" evidence="18">
    <location>
        <begin position="293"/>
        <end position="298"/>
    </location>
</feature>
<feature type="strand" evidence="18">
    <location>
        <begin position="303"/>
        <end position="305"/>
    </location>
</feature>
<feature type="strand" evidence="18">
    <location>
        <begin position="308"/>
        <end position="310"/>
    </location>
</feature>
<feature type="strand" evidence="18">
    <location>
        <begin position="312"/>
        <end position="314"/>
    </location>
</feature>
<feature type="helix" evidence="18">
    <location>
        <begin position="317"/>
        <end position="348"/>
    </location>
</feature>
<feature type="turn" evidence="18">
    <location>
        <begin position="349"/>
        <end position="351"/>
    </location>
</feature>
<feature type="turn" evidence="18">
    <location>
        <begin position="356"/>
        <end position="359"/>
    </location>
</feature>
<feature type="helix" evidence="18">
    <location>
        <begin position="361"/>
        <end position="368"/>
    </location>
</feature>
<feature type="helix" evidence="18">
    <location>
        <begin position="371"/>
        <end position="382"/>
    </location>
</feature>
<feature type="strand" evidence="18">
    <location>
        <begin position="385"/>
        <end position="387"/>
    </location>
</feature>
<feature type="turn" evidence="18">
    <location>
        <begin position="389"/>
        <end position="391"/>
    </location>
</feature>
<feature type="strand" evidence="18">
    <location>
        <begin position="393"/>
        <end position="400"/>
    </location>
</feature>
<feature type="helix" evidence="18">
    <location>
        <begin position="403"/>
        <end position="406"/>
    </location>
</feature>
<feature type="helix" evidence="18">
    <location>
        <begin position="409"/>
        <end position="436"/>
    </location>
</feature>
<feature type="strand" evidence="18">
    <location>
        <begin position="437"/>
        <end position="441"/>
    </location>
</feature>
<feature type="helix" evidence="18">
    <location>
        <begin position="444"/>
        <end position="498"/>
    </location>
</feature>
<feature type="helix" evidence="18">
    <location>
        <begin position="519"/>
        <end position="537"/>
    </location>
</feature>
<feature type="helix" evidence="18">
    <location>
        <begin position="538"/>
        <end position="540"/>
    </location>
</feature>
<feature type="helix" evidence="18">
    <location>
        <begin position="543"/>
        <end position="554"/>
    </location>
</feature>
<reference key="1">
    <citation type="journal article" date="1997" name="Biochem. Biophys. Res. Commun.">
        <title>Cloning of a mouse Smoothened cDNA and expression patterns of hedgehog signalling molecules during chondrogenesis and cartilage differentiation in clonal mouse EC cells, ATDC5.</title>
        <authorList>
            <person name="Akiyama H."/>
            <person name="Shigeno C."/>
            <person name="Hiraki Y."/>
            <person name="Shukunami C."/>
            <person name="Kohno H."/>
            <person name="Akagi M."/>
            <person name="Konishi J."/>
            <person name="Nakamura T."/>
        </authorList>
    </citation>
    <scope>NUCLEOTIDE SEQUENCE [MRNA]</scope>
</reference>
<reference key="2">
    <citation type="journal article" date="2009" name="PLoS Biol.">
        <title>Lineage-specific biology revealed by a finished genome assembly of the mouse.</title>
        <authorList>
            <person name="Church D.M."/>
            <person name="Goodstadt L."/>
            <person name="Hillier L.W."/>
            <person name="Zody M.C."/>
            <person name="Goldstein S."/>
            <person name="She X."/>
            <person name="Bult C.J."/>
            <person name="Agarwala R."/>
            <person name="Cherry J.L."/>
            <person name="DiCuccio M."/>
            <person name="Hlavina W."/>
            <person name="Kapustin Y."/>
            <person name="Meric P."/>
            <person name="Maglott D."/>
            <person name="Birtle Z."/>
            <person name="Marques A.C."/>
            <person name="Graves T."/>
            <person name="Zhou S."/>
            <person name="Teague B."/>
            <person name="Potamousis K."/>
            <person name="Churas C."/>
            <person name="Place M."/>
            <person name="Herschleb J."/>
            <person name="Runnheim R."/>
            <person name="Forrest D."/>
            <person name="Amos-Landgraf J."/>
            <person name="Schwartz D.C."/>
            <person name="Cheng Z."/>
            <person name="Lindblad-Toh K."/>
            <person name="Eichler E.E."/>
            <person name="Ponting C.P."/>
        </authorList>
    </citation>
    <scope>NUCLEOTIDE SEQUENCE [LARGE SCALE GENOMIC DNA]</scope>
    <source>
        <strain>C57BL/6J</strain>
    </source>
</reference>
<reference key="3">
    <citation type="journal article" date="2004" name="Science">
        <title>Activity-dependent internalization of smoothened mediated by beta-arrestin 2 and GRK2.</title>
        <authorList>
            <person name="Chen W."/>
            <person name="Ren X.R."/>
            <person name="Nelson C.D."/>
            <person name="Barak L.S."/>
            <person name="Chen J.K."/>
            <person name="Beachy P.A."/>
            <person name="de Sauvage F."/>
            <person name="Lefkowitz R.J."/>
        </authorList>
    </citation>
    <scope>INTERACTION WITH ARRB2</scope>
</reference>
<reference key="4">
    <citation type="journal article" date="2005" name="Nature">
        <title>Vertebrate Smoothened functions at the primary cilium.</title>
        <authorList>
            <person name="Corbit K.C."/>
            <person name="Aanstad P."/>
            <person name="Singla V."/>
            <person name="Norman A.R."/>
            <person name="Stainier D.Y."/>
            <person name="Reiter J.F."/>
        </authorList>
    </citation>
    <scope>SUBCELLULAR LOCATION</scope>
    <scope>TISSUE SPECIFICITY</scope>
    <scope>MUTAGENESIS OF 549-TRP-ARG-550</scope>
</reference>
<reference key="5">
    <citation type="journal article" date="2009" name="Curr. Biol.">
        <title>The extracellular domain of Smoothened regulates ciliary localization and is required for high-level Hh signaling.</title>
        <authorList>
            <person name="Aanstad P."/>
            <person name="Santos N."/>
            <person name="Corbit K.C."/>
            <person name="Scherz P.J."/>
            <person name="Trinh L.A."/>
            <person name="Salvenmoser W."/>
            <person name="Huisken J."/>
            <person name="Reiter J.F."/>
            <person name="Stainier D.Y."/>
        </authorList>
    </citation>
    <scope>SUBCELLULAR LOCATION</scope>
    <scope>DOMAIN</scope>
    <scope>MUTAGENESIS OF CYS-151</scope>
</reference>
<reference key="6">
    <citation type="journal article" date="2011" name="J. Biol. Chem.">
        <title>Growth arrest specific 8 (Gas8) and G protein-coupled receptor kinase 2 (GRK2) cooperate in the control of Smoothened signaling.</title>
        <authorList>
            <person name="Evron T."/>
            <person name="Philipp M."/>
            <person name="Lu J."/>
            <person name="Meloni A.R."/>
            <person name="Burkhalter M."/>
            <person name="Chen W."/>
            <person name="Caron M.G."/>
        </authorList>
    </citation>
    <scope>SUBCELLULAR LOCATION</scope>
    <scope>INTERACTION WITH GAS8</scope>
</reference>
<reference key="7">
    <citation type="journal article" date="2011" name="PLoS Genet.">
        <title>A novel protein LZTFL1 regulates ciliary trafficking of the BBSome and Smoothened.</title>
        <authorList>
            <person name="Seo S."/>
            <person name="Zhang Q."/>
            <person name="Bugge K."/>
            <person name="Breslow D.K."/>
            <person name="Searby C.C."/>
            <person name="Nachury M.V."/>
            <person name="Sheffield V.C."/>
        </authorList>
    </citation>
    <scope>ASSOCIATION WITH THE BBSOME COMPLEX</scope>
    <scope>INTERACTION WITH BBS5 AND BBS7</scope>
</reference>
<reference key="8">
    <citation type="journal article" date="2013" name="Elife">
        <title>Structure and function of the Smoothened extracellular domain in vertebrate Hedgehog signaling.</title>
        <authorList>
            <person name="Nachtergaele S."/>
            <person name="Whalen D.M."/>
            <person name="Mydock L.K."/>
            <person name="Zhao Z."/>
            <person name="Malinauskas T."/>
            <person name="Krishnan K."/>
            <person name="Ingham P.W."/>
            <person name="Covey D.F."/>
            <person name="Siebold C."/>
            <person name="Rohatgi R."/>
        </authorList>
    </citation>
    <scope>DOMAIN</scope>
    <scope>MUTAGENESIS OF PRO-88; LEU-112; GLY-115; LEU-116; ASN-118; PRO-120; PRO-128; TYR-134; LEU-150; GLU-162; ARG-165; GLY-166; PRO-168 AND PHE-170</scope>
</reference>
<reference key="9">
    <citation type="journal article" date="2013" name="Nat. Chem. Biol.">
        <title>Oxysterol binding to the extracellular domain of Smoothened in Hedgehog signaling.</title>
        <authorList>
            <person name="Nedelcu D."/>
            <person name="Liu J."/>
            <person name="Xu Y."/>
            <person name="Jao C."/>
            <person name="Salic A."/>
        </authorList>
    </citation>
    <scope>SUBCELLULAR LOCATION</scope>
    <scope>MUTAGENESIS OF 112-LEU--ALA-119; LEU-112; TRP-113 AND SER-114</scope>
</reference>
<reference key="10">
    <citation type="journal article" date="2015" name="Genes Dev.">
        <title>Bifurcating action of Smoothened in Hedgehog signaling is mediated by Dlg5.</title>
        <authorList>
            <person name="Chong Y.C."/>
            <person name="Mann R.K."/>
            <person name="Zhao C."/>
            <person name="Kato M."/>
            <person name="Beachy P.A."/>
        </authorList>
    </citation>
    <scope>FUNCTION</scope>
    <scope>INTERACTION WITH DLG5; KIF7 AND SDCBP</scope>
    <scope>SUBCELLULAR LOCATION</scope>
</reference>
<reference key="11">
    <citation type="journal article" date="2021" name="PLoS Biol.">
        <title>Smoothened transduces Hedgehog signals via activity-dependent sequestration of PKA catalytic subunits.</title>
        <authorList>
            <person name="Arveseth C.D."/>
            <person name="Happ J.T."/>
            <person name="Hedeen D.S."/>
            <person name="Zhu J.F."/>
            <person name="Capener J.L."/>
            <person name="Klatt Shaw D."/>
            <person name="Deshpande I."/>
            <person name="Liang J."/>
            <person name="Xu J."/>
            <person name="Stubben S.L."/>
            <person name="Nelson I.B."/>
            <person name="Walker M.F."/>
            <person name="Kawakami K."/>
            <person name="Inoue A."/>
            <person name="Krogan N.J."/>
            <person name="Grunwald D.J."/>
            <person name="Huettenhain R."/>
            <person name="Manglik A."/>
            <person name="Myers B.R."/>
        </authorList>
    </citation>
    <scope>FUNCTION</scope>
    <scope>INTERACTION WITH PRKACA</scope>
    <scope>SUBCELLULAR LOCATION</scope>
    <scope>PHOSPHORYLATION AT SER-560; SER-578; SER-594; THR-597; SER-599; SER-642; THR-644; THR-648 AND SER-666</scope>
</reference>
<reference key="12">
    <citation type="journal article" date="2022" name="Sci. Adv.">
        <title>Patched 1 regulates Smoothened by controlling sterol binding to its extracellular cysteine-rich domain.</title>
        <authorList>
            <person name="Kinnebrew M."/>
            <person name="Woolley R.E."/>
            <person name="Ansell T.B."/>
            <person name="Byrne E.F.X."/>
            <person name="Frigui S."/>
            <person name="Luchetti G."/>
            <person name="Sircar R."/>
            <person name="Nachtergaele S."/>
            <person name="Mydock-McGrane L."/>
            <person name="Krishnan K."/>
            <person name="Newstead S."/>
            <person name="Sansom M.S.P."/>
            <person name="Covey D.F."/>
            <person name="Siebold C."/>
            <person name="Rohatgi R."/>
        </authorList>
    </citation>
    <scope>DOMAIN</scope>
    <scope>MUTAGENESIS OF ASP-99; VAL-333 AND TYR-398</scope>
</reference>
<reference evidence="17" key="13">
    <citation type="journal article" date="2019" name="Nature">
        <title>Smoothened stimulation by membrane sterols drives Hedgehog pathway activity.</title>
        <authorList>
            <person name="Deshpande I."/>
            <person name="Liang J."/>
            <person name="Hedeen D."/>
            <person name="Roberts K.J."/>
            <person name="Zhang Y."/>
            <person name="Ha B."/>
            <person name="Latorraca N.R."/>
            <person name="Faust B."/>
            <person name="Dror R.O."/>
            <person name="Beachy P.A."/>
            <person name="Myers B.R."/>
            <person name="Manglik A."/>
        </authorList>
    </citation>
    <scope>X-RAY CRYSTALLOGRAPHY (2.80 ANGSTROMS) OF 64-566 IN COMPLEX WITH CHOLESTEROL</scope>
    <scope>DOMAIN</scope>
    <scope>DISULFIDE BONDS</scope>
    <scope>MUTAGENESIS OF VAL-333; VAL-408; ILE-412; GLY-420; ALA-463 AND THR-470</scope>
</reference>